<keyword id="KW-0687">Ribonucleoprotein</keyword>
<keyword id="KW-0689">Ribosomal protein</keyword>
<reference key="1">
    <citation type="journal article" date="2009" name="J. Bacteriol.">
        <title>Genomic sequencing reveals regulatory mutations and recombinational events in the widely used MC4100 lineage of Escherichia coli K-12.</title>
        <authorList>
            <person name="Ferenci T."/>
            <person name="Zhou Z."/>
            <person name="Betteridge T."/>
            <person name="Ren Y."/>
            <person name="Liu Y."/>
            <person name="Feng L."/>
            <person name="Reeves P.R."/>
            <person name="Wang L."/>
        </authorList>
    </citation>
    <scope>NUCLEOTIDE SEQUENCE [LARGE SCALE GENOMIC DNA]</scope>
    <source>
        <strain>K12 / MC4100 / BW2952</strain>
    </source>
</reference>
<name>RL28_ECOBW</name>
<feature type="chain" id="PRO_1000205596" description="Large ribosomal subunit protein bL28">
    <location>
        <begin position="1"/>
        <end position="78"/>
    </location>
</feature>
<organism>
    <name type="scientific">Escherichia coli (strain K12 / MC4100 / BW2952)</name>
    <dbReference type="NCBI Taxonomy" id="595496"/>
    <lineage>
        <taxon>Bacteria</taxon>
        <taxon>Pseudomonadati</taxon>
        <taxon>Pseudomonadota</taxon>
        <taxon>Gammaproteobacteria</taxon>
        <taxon>Enterobacterales</taxon>
        <taxon>Enterobacteriaceae</taxon>
        <taxon>Escherichia</taxon>
    </lineage>
</organism>
<protein>
    <recommendedName>
        <fullName evidence="1">Large ribosomal subunit protein bL28</fullName>
    </recommendedName>
    <alternativeName>
        <fullName evidence="2">50S ribosomal protein L28</fullName>
    </alternativeName>
</protein>
<accession>C4ZXM9</accession>
<comment type="similarity">
    <text evidence="1">Belongs to the bacterial ribosomal protein bL28 family.</text>
</comment>
<evidence type="ECO:0000255" key="1">
    <source>
        <dbReference type="HAMAP-Rule" id="MF_00373"/>
    </source>
</evidence>
<evidence type="ECO:0000305" key="2"/>
<dbReference type="EMBL" id="CP001396">
    <property type="protein sequence ID" value="ACR61864.1"/>
    <property type="molecule type" value="Genomic_DNA"/>
</dbReference>
<dbReference type="RefSeq" id="WP_000091955.1">
    <property type="nucleotide sequence ID" value="NC_012759.1"/>
</dbReference>
<dbReference type="SMR" id="C4ZXM9"/>
<dbReference type="GeneID" id="93778350"/>
<dbReference type="KEGG" id="ebw:BWG_3328"/>
<dbReference type="HOGENOM" id="CLU_064548_3_1_6"/>
<dbReference type="GO" id="GO:0022625">
    <property type="term" value="C:cytosolic large ribosomal subunit"/>
    <property type="evidence" value="ECO:0007669"/>
    <property type="project" value="TreeGrafter"/>
</dbReference>
<dbReference type="GO" id="GO:0003735">
    <property type="term" value="F:structural constituent of ribosome"/>
    <property type="evidence" value="ECO:0007669"/>
    <property type="project" value="InterPro"/>
</dbReference>
<dbReference type="GO" id="GO:0006412">
    <property type="term" value="P:translation"/>
    <property type="evidence" value="ECO:0007669"/>
    <property type="project" value="UniProtKB-UniRule"/>
</dbReference>
<dbReference type="FunFam" id="2.30.170.40:FF:000001">
    <property type="entry name" value="50S ribosomal protein L28"/>
    <property type="match status" value="1"/>
</dbReference>
<dbReference type="Gene3D" id="2.30.170.40">
    <property type="entry name" value="Ribosomal protein L28/L24"/>
    <property type="match status" value="1"/>
</dbReference>
<dbReference type="HAMAP" id="MF_00373">
    <property type="entry name" value="Ribosomal_bL28"/>
    <property type="match status" value="1"/>
</dbReference>
<dbReference type="InterPro" id="IPR026569">
    <property type="entry name" value="Ribosomal_bL28"/>
</dbReference>
<dbReference type="InterPro" id="IPR034704">
    <property type="entry name" value="Ribosomal_bL28/bL31-like_sf"/>
</dbReference>
<dbReference type="InterPro" id="IPR001383">
    <property type="entry name" value="Ribosomal_bL28_bact-type"/>
</dbReference>
<dbReference type="InterPro" id="IPR037147">
    <property type="entry name" value="Ribosomal_bL28_sf"/>
</dbReference>
<dbReference type="NCBIfam" id="TIGR00009">
    <property type="entry name" value="L28"/>
    <property type="match status" value="1"/>
</dbReference>
<dbReference type="PANTHER" id="PTHR13528">
    <property type="entry name" value="39S RIBOSOMAL PROTEIN L28, MITOCHONDRIAL"/>
    <property type="match status" value="1"/>
</dbReference>
<dbReference type="PANTHER" id="PTHR13528:SF2">
    <property type="entry name" value="LARGE RIBOSOMAL SUBUNIT PROTEIN BL28M"/>
    <property type="match status" value="1"/>
</dbReference>
<dbReference type="Pfam" id="PF00830">
    <property type="entry name" value="Ribosomal_L28"/>
    <property type="match status" value="1"/>
</dbReference>
<dbReference type="SUPFAM" id="SSF143800">
    <property type="entry name" value="L28p-like"/>
    <property type="match status" value="1"/>
</dbReference>
<gene>
    <name evidence="1" type="primary">rpmB</name>
    <name type="ordered locus">BWG_3328</name>
</gene>
<proteinExistence type="inferred from homology"/>
<sequence length="78" mass="9006">MSRVCQVTGKRPVTGNNRSHALNATKRRFLPNLHSHRFWVESEKRFVTLRVSAKGMRVIDKKGIDTVLAELRARGEKY</sequence>